<dbReference type="EC" id="5.1.99.6"/>
<dbReference type="EMBL" id="CU329670">
    <property type="protein sequence ID" value="CAB10102.1"/>
    <property type="molecule type" value="Genomic_DNA"/>
</dbReference>
<dbReference type="PIR" id="T37705">
    <property type="entry name" value="T37705"/>
</dbReference>
<dbReference type="RefSeq" id="NP_594292.1">
    <property type="nucleotide sequence ID" value="NM_001019715.2"/>
</dbReference>
<dbReference type="SMR" id="O13725"/>
<dbReference type="FunCoup" id="O13725">
    <property type="interactions" value="45"/>
</dbReference>
<dbReference type="STRING" id="284812.O13725"/>
<dbReference type="PaxDb" id="4896-SPAC15A10.05c.1"/>
<dbReference type="EnsemblFungi" id="SPAC15A10.05c.1">
    <property type="protein sequence ID" value="SPAC15A10.05c.1:pep"/>
    <property type="gene ID" value="SPAC15A10.05c"/>
</dbReference>
<dbReference type="GeneID" id="2542742"/>
<dbReference type="KEGG" id="spo:2542742"/>
<dbReference type="PomBase" id="SPAC15A10.05c">
    <property type="gene designation" value="mug182"/>
</dbReference>
<dbReference type="VEuPathDB" id="FungiDB:SPAC15A10.05c"/>
<dbReference type="eggNOG" id="KOG2585">
    <property type="taxonomic scope" value="Eukaryota"/>
</dbReference>
<dbReference type="HOGENOM" id="CLU_024853_3_0_1"/>
<dbReference type="InParanoid" id="O13725"/>
<dbReference type="OMA" id="RHLFHYG"/>
<dbReference type="PhylomeDB" id="O13725"/>
<dbReference type="Reactome" id="R-SPO-197264">
    <property type="pathway name" value="Nicotinamide salvaging"/>
</dbReference>
<dbReference type="PRO" id="PR:O13725"/>
<dbReference type="Proteomes" id="UP000002485">
    <property type="component" value="Chromosome I"/>
</dbReference>
<dbReference type="GO" id="GO:0005829">
    <property type="term" value="C:cytosol"/>
    <property type="evidence" value="ECO:0007005"/>
    <property type="project" value="PomBase"/>
</dbReference>
<dbReference type="GO" id="GO:0005739">
    <property type="term" value="C:mitochondrion"/>
    <property type="evidence" value="ECO:0000318"/>
    <property type="project" value="GO_Central"/>
</dbReference>
<dbReference type="GO" id="GO:0005634">
    <property type="term" value="C:nucleus"/>
    <property type="evidence" value="ECO:0007005"/>
    <property type="project" value="PomBase"/>
</dbReference>
<dbReference type="GO" id="GO:0046872">
    <property type="term" value="F:metal ion binding"/>
    <property type="evidence" value="ECO:0007669"/>
    <property type="project" value="UniProtKB-KW"/>
</dbReference>
<dbReference type="GO" id="GO:0052856">
    <property type="term" value="F:NAD(P)HX epimerase activity"/>
    <property type="evidence" value="ECO:0000318"/>
    <property type="project" value="GO_Central"/>
</dbReference>
<dbReference type="GO" id="GO:0000166">
    <property type="term" value="F:nucleotide binding"/>
    <property type="evidence" value="ECO:0007669"/>
    <property type="project" value="UniProtKB-KW"/>
</dbReference>
<dbReference type="GO" id="GO:0046496">
    <property type="term" value="P:nicotinamide nucleotide metabolic process"/>
    <property type="evidence" value="ECO:0000266"/>
    <property type="project" value="PomBase"/>
</dbReference>
<dbReference type="FunFam" id="3.40.50.10260:FF:000005">
    <property type="entry name" value="NAD(P)H-hydrate epimerase"/>
    <property type="match status" value="1"/>
</dbReference>
<dbReference type="Gene3D" id="3.40.50.10260">
    <property type="entry name" value="YjeF N-terminal domain"/>
    <property type="match status" value="1"/>
</dbReference>
<dbReference type="HAMAP" id="MF_01966">
    <property type="entry name" value="NADHX_epimerase"/>
    <property type="match status" value="1"/>
</dbReference>
<dbReference type="InterPro" id="IPR004443">
    <property type="entry name" value="YjeF_N_dom"/>
</dbReference>
<dbReference type="InterPro" id="IPR036652">
    <property type="entry name" value="YjeF_N_dom_sf"/>
</dbReference>
<dbReference type="InterPro" id="IPR032976">
    <property type="entry name" value="YJEFN_prot_NAXE-like"/>
</dbReference>
<dbReference type="NCBIfam" id="TIGR00197">
    <property type="entry name" value="yjeF_nterm"/>
    <property type="match status" value="1"/>
</dbReference>
<dbReference type="PANTHER" id="PTHR13232">
    <property type="entry name" value="NAD(P)H-HYDRATE EPIMERASE"/>
    <property type="match status" value="1"/>
</dbReference>
<dbReference type="PANTHER" id="PTHR13232:SF10">
    <property type="entry name" value="NAD(P)H-HYDRATE EPIMERASE"/>
    <property type="match status" value="1"/>
</dbReference>
<dbReference type="Pfam" id="PF03853">
    <property type="entry name" value="YjeF_N"/>
    <property type="match status" value="1"/>
</dbReference>
<dbReference type="SUPFAM" id="SSF64153">
    <property type="entry name" value="YjeF N-terminal domain-like"/>
    <property type="match status" value="1"/>
</dbReference>
<dbReference type="PROSITE" id="PS51385">
    <property type="entry name" value="YJEF_N"/>
    <property type="match status" value="1"/>
</dbReference>
<gene>
    <name type="primary">mug182</name>
    <name type="ORF">SPAC15A10.05c</name>
</gene>
<comment type="function">
    <text evidence="1 2">Catalyzes the epimerization of the S- and R-forms of NAD(P)HX, a damaged form of NAD(P)H that is a result of enzymatic or heat-dependent hydration. This is a prerequisite for the S-specific NAD(P)H-hydrate dehydratase to allow the repair of both epimers of NAD(P)HX (By similarity). May have a role in meiosis.</text>
</comment>
<comment type="catalytic activity">
    <reaction>
        <text>(6R)-NADHX = (6S)-NADHX</text>
        <dbReference type="Rhea" id="RHEA:32215"/>
        <dbReference type="ChEBI" id="CHEBI:64074"/>
        <dbReference type="ChEBI" id="CHEBI:64075"/>
        <dbReference type="EC" id="5.1.99.6"/>
    </reaction>
</comment>
<comment type="catalytic activity">
    <reaction>
        <text>(6R)-NADPHX = (6S)-NADPHX</text>
        <dbReference type="Rhea" id="RHEA:32227"/>
        <dbReference type="ChEBI" id="CHEBI:64076"/>
        <dbReference type="ChEBI" id="CHEBI:64077"/>
        <dbReference type="EC" id="5.1.99.6"/>
    </reaction>
</comment>
<comment type="cofactor">
    <cofactor evidence="1">
        <name>K(+)</name>
        <dbReference type="ChEBI" id="CHEBI:29103"/>
    </cofactor>
    <text evidence="1">Binds 1 potassium ion per subunit.</text>
</comment>
<comment type="subcellular location">
    <subcellularLocation>
        <location evidence="1 3">Cytoplasm</location>
    </subcellularLocation>
    <subcellularLocation>
        <location evidence="1">Mitochondrion</location>
    </subcellularLocation>
    <subcellularLocation>
        <location evidence="3">Nucleus</location>
    </subcellularLocation>
</comment>
<comment type="similarity">
    <text evidence="1">Belongs to the NnrE/AIBP family.</text>
</comment>
<name>NNRE_SCHPO</name>
<accession>O13725</accession>
<keyword id="KW-0963">Cytoplasm</keyword>
<keyword id="KW-0413">Isomerase</keyword>
<keyword id="KW-0479">Metal-binding</keyword>
<keyword id="KW-0496">Mitochondrion</keyword>
<keyword id="KW-0520">NAD</keyword>
<keyword id="KW-0521">NADP</keyword>
<keyword id="KW-0547">Nucleotide-binding</keyword>
<keyword id="KW-0539">Nucleus</keyword>
<keyword id="KW-0630">Potassium</keyword>
<keyword id="KW-1185">Reference proteome</keyword>
<sequence length="242" mass="26466">MSISCLSASAAKALDAELMSAGAFSIDQLMELAGLSVSQAVYREYPPSQYSQVLICCGPGNNGGDGLVAARHLWQYGYKPTVYYPKPSSPELYKRLCKQLDDLDIPVVKSHDSNHFSQLLRDSKLVVDSIFGFSFKGPVRDPFGSILAAIVESKIKVLSVDAPSSWEIDEGPQKEGPLKDFDPDTLISLTAPKPCSKFYKGKHYLGGRFVSKVITKKFNLSLPPYPGIDQVVDITNKPLSMV</sequence>
<evidence type="ECO:0000255" key="1">
    <source>
        <dbReference type="HAMAP-Rule" id="MF_03159"/>
    </source>
</evidence>
<evidence type="ECO:0000269" key="2">
    <source>
    </source>
</evidence>
<evidence type="ECO:0000269" key="3">
    <source>
    </source>
</evidence>
<protein>
    <recommendedName>
        <fullName evidence="1">NAD(P)H-hydrate epimerase</fullName>
        <ecNumber>5.1.99.6</ecNumber>
    </recommendedName>
    <alternativeName>
        <fullName>Meiotically up-regulated gene 182 protein</fullName>
    </alternativeName>
    <alternativeName>
        <fullName evidence="1">NAD(P)HX epimerase</fullName>
    </alternativeName>
</protein>
<reference key="1">
    <citation type="journal article" date="2002" name="Nature">
        <title>The genome sequence of Schizosaccharomyces pombe.</title>
        <authorList>
            <person name="Wood V."/>
            <person name="Gwilliam R."/>
            <person name="Rajandream M.A."/>
            <person name="Lyne M.H."/>
            <person name="Lyne R."/>
            <person name="Stewart A."/>
            <person name="Sgouros J.G."/>
            <person name="Peat N."/>
            <person name="Hayles J."/>
            <person name="Baker S.G."/>
            <person name="Basham D."/>
            <person name="Bowman S."/>
            <person name="Brooks K."/>
            <person name="Brown D."/>
            <person name="Brown S."/>
            <person name="Chillingworth T."/>
            <person name="Churcher C.M."/>
            <person name="Collins M."/>
            <person name="Connor R."/>
            <person name="Cronin A."/>
            <person name="Davis P."/>
            <person name="Feltwell T."/>
            <person name="Fraser A."/>
            <person name="Gentles S."/>
            <person name="Goble A."/>
            <person name="Hamlin N."/>
            <person name="Harris D.E."/>
            <person name="Hidalgo J."/>
            <person name="Hodgson G."/>
            <person name="Holroyd S."/>
            <person name="Hornsby T."/>
            <person name="Howarth S."/>
            <person name="Huckle E.J."/>
            <person name="Hunt S."/>
            <person name="Jagels K."/>
            <person name="James K.D."/>
            <person name="Jones L."/>
            <person name="Jones M."/>
            <person name="Leather S."/>
            <person name="McDonald S."/>
            <person name="McLean J."/>
            <person name="Mooney P."/>
            <person name="Moule S."/>
            <person name="Mungall K.L."/>
            <person name="Murphy L.D."/>
            <person name="Niblett D."/>
            <person name="Odell C."/>
            <person name="Oliver K."/>
            <person name="O'Neil S."/>
            <person name="Pearson D."/>
            <person name="Quail M.A."/>
            <person name="Rabbinowitsch E."/>
            <person name="Rutherford K.M."/>
            <person name="Rutter S."/>
            <person name="Saunders D."/>
            <person name="Seeger K."/>
            <person name="Sharp S."/>
            <person name="Skelton J."/>
            <person name="Simmonds M.N."/>
            <person name="Squares R."/>
            <person name="Squares S."/>
            <person name="Stevens K."/>
            <person name="Taylor K."/>
            <person name="Taylor R.G."/>
            <person name="Tivey A."/>
            <person name="Walsh S.V."/>
            <person name="Warren T."/>
            <person name="Whitehead S."/>
            <person name="Woodward J.R."/>
            <person name="Volckaert G."/>
            <person name="Aert R."/>
            <person name="Robben J."/>
            <person name="Grymonprez B."/>
            <person name="Weltjens I."/>
            <person name="Vanstreels E."/>
            <person name="Rieger M."/>
            <person name="Schaefer M."/>
            <person name="Mueller-Auer S."/>
            <person name="Gabel C."/>
            <person name="Fuchs M."/>
            <person name="Duesterhoeft A."/>
            <person name="Fritzc C."/>
            <person name="Holzer E."/>
            <person name="Moestl D."/>
            <person name="Hilbert H."/>
            <person name="Borzym K."/>
            <person name="Langer I."/>
            <person name="Beck A."/>
            <person name="Lehrach H."/>
            <person name="Reinhardt R."/>
            <person name="Pohl T.M."/>
            <person name="Eger P."/>
            <person name="Zimmermann W."/>
            <person name="Wedler H."/>
            <person name="Wambutt R."/>
            <person name="Purnelle B."/>
            <person name="Goffeau A."/>
            <person name="Cadieu E."/>
            <person name="Dreano S."/>
            <person name="Gloux S."/>
            <person name="Lelaure V."/>
            <person name="Mottier S."/>
            <person name="Galibert F."/>
            <person name="Aves S.J."/>
            <person name="Xiang Z."/>
            <person name="Hunt C."/>
            <person name="Moore K."/>
            <person name="Hurst S.M."/>
            <person name="Lucas M."/>
            <person name="Rochet M."/>
            <person name="Gaillardin C."/>
            <person name="Tallada V.A."/>
            <person name="Garzon A."/>
            <person name="Thode G."/>
            <person name="Daga R.R."/>
            <person name="Cruzado L."/>
            <person name="Jimenez J."/>
            <person name="Sanchez M."/>
            <person name="del Rey F."/>
            <person name="Benito J."/>
            <person name="Dominguez A."/>
            <person name="Revuelta J.L."/>
            <person name="Moreno S."/>
            <person name="Armstrong J."/>
            <person name="Forsburg S.L."/>
            <person name="Cerutti L."/>
            <person name="Lowe T."/>
            <person name="McCombie W.R."/>
            <person name="Paulsen I."/>
            <person name="Potashkin J."/>
            <person name="Shpakovski G.V."/>
            <person name="Ussery D."/>
            <person name="Barrell B.G."/>
            <person name="Nurse P."/>
        </authorList>
    </citation>
    <scope>NUCLEOTIDE SEQUENCE [LARGE SCALE GENOMIC DNA]</scope>
    <source>
        <strain>972 / ATCC 24843</strain>
    </source>
</reference>
<reference key="2">
    <citation type="journal article" date="2005" name="Curr. Biol.">
        <title>A large-scale screen in S. pombe identifies seven novel genes required for critical meiotic events.</title>
        <authorList>
            <person name="Martin-Castellanos C."/>
            <person name="Blanco M."/>
            <person name="Rozalen A.E."/>
            <person name="Perez-Hidalgo L."/>
            <person name="Garcia A.I."/>
            <person name="Conde F."/>
            <person name="Mata J."/>
            <person name="Ellermeier C."/>
            <person name="Davis L."/>
            <person name="San-Segundo P."/>
            <person name="Smith G.R."/>
            <person name="Moreno S."/>
        </authorList>
    </citation>
    <scope>FUNCTION IN MEIOSIS</scope>
</reference>
<reference key="3">
    <citation type="journal article" date="2006" name="Nat. Biotechnol.">
        <title>ORFeome cloning and global analysis of protein localization in the fission yeast Schizosaccharomyces pombe.</title>
        <authorList>
            <person name="Matsuyama A."/>
            <person name="Arai R."/>
            <person name="Yashiroda Y."/>
            <person name="Shirai A."/>
            <person name="Kamata A."/>
            <person name="Sekido S."/>
            <person name="Kobayashi Y."/>
            <person name="Hashimoto A."/>
            <person name="Hamamoto M."/>
            <person name="Hiraoka Y."/>
            <person name="Horinouchi S."/>
            <person name="Yoshida M."/>
        </authorList>
    </citation>
    <scope>SUBCELLULAR LOCATION [LARGE SCALE ANALYSIS]</scope>
</reference>
<proteinExistence type="evidence at protein level"/>
<organism>
    <name type="scientific">Schizosaccharomyces pombe (strain 972 / ATCC 24843)</name>
    <name type="common">Fission yeast</name>
    <dbReference type="NCBI Taxonomy" id="284812"/>
    <lineage>
        <taxon>Eukaryota</taxon>
        <taxon>Fungi</taxon>
        <taxon>Dikarya</taxon>
        <taxon>Ascomycota</taxon>
        <taxon>Taphrinomycotina</taxon>
        <taxon>Schizosaccharomycetes</taxon>
        <taxon>Schizosaccharomycetales</taxon>
        <taxon>Schizosaccharomycetaceae</taxon>
        <taxon>Schizosaccharomyces</taxon>
    </lineage>
</organism>
<feature type="chain" id="PRO_0000119062" description="NAD(P)H-hydrate epimerase">
    <location>
        <begin position="1"/>
        <end position="242"/>
    </location>
</feature>
<feature type="domain" description="YjeF N-terminal" evidence="1">
    <location>
        <begin position="11"/>
        <end position="221"/>
    </location>
</feature>
<feature type="binding site" evidence="1">
    <location>
        <begin position="61"/>
        <end position="65"/>
    </location>
    <ligand>
        <name>(6S)-NADPHX</name>
        <dbReference type="ChEBI" id="CHEBI:64076"/>
    </ligand>
</feature>
<feature type="binding site" evidence="1">
    <location>
        <position position="62"/>
    </location>
    <ligand>
        <name>K(+)</name>
        <dbReference type="ChEBI" id="CHEBI:29103"/>
    </ligand>
</feature>
<feature type="binding site" evidence="1">
    <location>
        <position position="128"/>
    </location>
    <ligand>
        <name>K(+)</name>
        <dbReference type="ChEBI" id="CHEBI:29103"/>
    </ligand>
</feature>
<feature type="binding site" evidence="1">
    <location>
        <begin position="132"/>
        <end position="138"/>
    </location>
    <ligand>
        <name>(6S)-NADPHX</name>
        <dbReference type="ChEBI" id="CHEBI:64076"/>
    </ligand>
</feature>
<feature type="binding site" evidence="1">
    <location>
        <position position="161"/>
    </location>
    <ligand>
        <name>(6S)-NADPHX</name>
        <dbReference type="ChEBI" id="CHEBI:64076"/>
    </ligand>
</feature>
<feature type="binding site" evidence="1">
    <location>
        <position position="164"/>
    </location>
    <ligand>
        <name>K(+)</name>
        <dbReference type="ChEBI" id="CHEBI:29103"/>
    </ligand>
</feature>